<feature type="chain" id="PRO_0000179776" description="Putative N-acetylmannosamine-6-phosphate 2-epimerase">
    <location>
        <begin position="1"/>
        <end position="228"/>
    </location>
</feature>
<sequence length="228" mass="24353">MSKLSYQEVLSQIQYGLISSCQPVDDGPMDKPEIVSAMAQASVMGGRSGLRIEGVDNLKATRPFVNVPIIGIVKRDLPDSPVRITPFLQDIEDLANAGADIIAVDGTSRPRPVDIESAVKKIHEMGCLAMADCSNLEEGLYCKALGFDIVGSTMSGYTGGAVPEEPDYQLVKDLKSAGCFVMAEGRYNTPELAKVAIEIGADCVTVGSALTRLEHIVSWFANSVKSAR</sequence>
<protein>
    <recommendedName>
        <fullName>Putative N-acetylmannosamine-6-phosphate 2-epimerase</fullName>
        <ecNumber>5.1.3.9</ecNumber>
    </recommendedName>
    <alternativeName>
        <fullName>ManNAc-6-P epimerase</fullName>
    </alternativeName>
</protein>
<organism>
    <name type="scientific">Haemophilus influenzae (strain ATCC 51907 / DSM 11121 / KW20 / Rd)</name>
    <dbReference type="NCBI Taxonomy" id="71421"/>
    <lineage>
        <taxon>Bacteria</taxon>
        <taxon>Pseudomonadati</taxon>
        <taxon>Pseudomonadota</taxon>
        <taxon>Gammaproteobacteria</taxon>
        <taxon>Pasteurellales</taxon>
        <taxon>Pasteurellaceae</taxon>
        <taxon>Haemophilus</taxon>
    </lineage>
</organism>
<accession>P71340</accession>
<proteinExistence type="inferred from homology"/>
<comment type="function">
    <text evidence="1">Converts N-acetylmannosamine-6-phosphate (ManNAc-6-P) to N-acetylglucosamine-6-phosphate (GlcNAc-6-P).</text>
</comment>
<comment type="catalytic activity">
    <reaction>
        <text>an N-acyl-D-glucosamine 6-phosphate = an N-acyl-D-mannosamine 6-phosphate</text>
        <dbReference type="Rhea" id="RHEA:23932"/>
        <dbReference type="ChEBI" id="CHEBI:57599"/>
        <dbReference type="ChEBI" id="CHEBI:57666"/>
        <dbReference type="EC" id="5.1.3.9"/>
    </reaction>
</comment>
<comment type="pathway">
    <text>Amino-sugar metabolism; N-acetylneuraminate degradation; D-fructose 6-phosphate from N-acetylneuraminate: step 3/5.</text>
</comment>
<comment type="similarity">
    <text evidence="1">Belongs to the NanE family.</text>
</comment>
<evidence type="ECO:0000305" key="1"/>
<dbReference type="EC" id="5.1.3.9"/>
<dbReference type="EMBL" id="L42023">
    <property type="protein sequence ID" value="AAC21817.1"/>
    <property type="molecule type" value="Genomic_DNA"/>
</dbReference>
<dbReference type="RefSeq" id="NP_438314.1">
    <property type="nucleotide sequence ID" value="NC_000907.1"/>
</dbReference>
<dbReference type="SMR" id="P71340"/>
<dbReference type="STRING" id="71421.HI_0145"/>
<dbReference type="EnsemblBacteria" id="AAC21817">
    <property type="protein sequence ID" value="AAC21817"/>
    <property type="gene ID" value="HI_0145"/>
</dbReference>
<dbReference type="KEGG" id="hin:HI_0145"/>
<dbReference type="PATRIC" id="fig|71421.8.peg.147"/>
<dbReference type="eggNOG" id="COG3010">
    <property type="taxonomic scope" value="Bacteria"/>
</dbReference>
<dbReference type="HOGENOM" id="CLU_086300_0_0_6"/>
<dbReference type="OrthoDB" id="9810372at2"/>
<dbReference type="PhylomeDB" id="P71340"/>
<dbReference type="BioCyc" id="HINF71421:G1GJ1-157-MONOMER"/>
<dbReference type="UniPathway" id="UPA00629">
    <property type="reaction ID" value="UER00682"/>
</dbReference>
<dbReference type="Proteomes" id="UP000000579">
    <property type="component" value="Chromosome"/>
</dbReference>
<dbReference type="GO" id="GO:0005829">
    <property type="term" value="C:cytosol"/>
    <property type="evidence" value="ECO:0000318"/>
    <property type="project" value="GO_Central"/>
</dbReference>
<dbReference type="GO" id="GO:0047465">
    <property type="term" value="F:N-acylglucosamine-6-phosphate 2-epimerase activity"/>
    <property type="evidence" value="ECO:0007669"/>
    <property type="project" value="UniProtKB-EC"/>
</dbReference>
<dbReference type="GO" id="GO:0005975">
    <property type="term" value="P:carbohydrate metabolic process"/>
    <property type="evidence" value="ECO:0007669"/>
    <property type="project" value="UniProtKB-UniRule"/>
</dbReference>
<dbReference type="GO" id="GO:0006053">
    <property type="term" value="P:N-acetylmannosamine catabolic process"/>
    <property type="evidence" value="ECO:0000318"/>
    <property type="project" value="GO_Central"/>
</dbReference>
<dbReference type="GO" id="GO:0019262">
    <property type="term" value="P:N-acetylneuraminate catabolic process"/>
    <property type="evidence" value="ECO:0000318"/>
    <property type="project" value="GO_Central"/>
</dbReference>
<dbReference type="CDD" id="cd04729">
    <property type="entry name" value="NanE"/>
    <property type="match status" value="1"/>
</dbReference>
<dbReference type="FunFam" id="3.20.20.70:FF:000035">
    <property type="entry name" value="Putative N-acetylmannosamine-6-phosphate 2-epimerase"/>
    <property type="match status" value="1"/>
</dbReference>
<dbReference type="Gene3D" id="3.20.20.70">
    <property type="entry name" value="Aldolase class I"/>
    <property type="match status" value="1"/>
</dbReference>
<dbReference type="HAMAP" id="MF_01235">
    <property type="entry name" value="ManNAc6P_epimer"/>
    <property type="match status" value="1"/>
</dbReference>
<dbReference type="InterPro" id="IPR013785">
    <property type="entry name" value="Aldolase_TIM"/>
</dbReference>
<dbReference type="InterPro" id="IPR007260">
    <property type="entry name" value="NanE"/>
</dbReference>
<dbReference type="InterPro" id="IPR011060">
    <property type="entry name" value="RibuloseP-bd_barrel"/>
</dbReference>
<dbReference type="NCBIfam" id="NF002231">
    <property type="entry name" value="PRK01130.1"/>
    <property type="match status" value="1"/>
</dbReference>
<dbReference type="PANTHER" id="PTHR36204">
    <property type="entry name" value="N-ACETYLMANNOSAMINE-6-PHOSPHATE 2-EPIMERASE-RELATED"/>
    <property type="match status" value="1"/>
</dbReference>
<dbReference type="PANTHER" id="PTHR36204:SF1">
    <property type="entry name" value="N-ACETYLMANNOSAMINE-6-PHOSPHATE 2-EPIMERASE-RELATED"/>
    <property type="match status" value="1"/>
</dbReference>
<dbReference type="Pfam" id="PF04131">
    <property type="entry name" value="NanE"/>
    <property type="match status" value="1"/>
</dbReference>
<dbReference type="SUPFAM" id="SSF51366">
    <property type="entry name" value="Ribulose-phoshate binding barrel"/>
    <property type="match status" value="1"/>
</dbReference>
<gene>
    <name type="primary">nanE</name>
    <name type="ordered locus">HI_0145</name>
</gene>
<reference key="1">
    <citation type="journal article" date="1995" name="Science">
        <title>Whole-genome random sequencing and assembly of Haemophilus influenzae Rd.</title>
        <authorList>
            <person name="Fleischmann R.D."/>
            <person name="Adams M.D."/>
            <person name="White O."/>
            <person name="Clayton R.A."/>
            <person name="Kirkness E.F."/>
            <person name="Kerlavage A.R."/>
            <person name="Bult C.J."/>
            <person name="Tomb J.-F."/>
            <person name="Dougherty B.A."/>
            <person name="Merrick J.M."/>
            <person name="McKenney K."/>
            <person name="Sutton G.G."/>
            <person name="FitzHugh W."/>
            <person name="Fields C.A."/>
            <person name="Gocayne J.D."/>
            <person name="Scott J.D."/>
            <person name="Shirley R."/>
            <person name="Liu L.-I."/>
            <person name="Glodek A."/>
            <person name="Kelley J.M."/>
            <person name="Weidman J.F."/>
            <person name="Phillips C.A."/>
            <person name="Spriggs T."/>
            <person name="Hedblom E."/>
            <person name="Cotton M.D."/>
            <person name="Utterback T.R."/>
            <person name="Hanna M.C."/>
            <person name="Nguyen D.T."/>
            <person name="Saudek D.M."/>
            <person name="Brandon R.C."/>
            <person name="Fine L.D."/>
            <person name="Fritchman J.L."/>
            <person name="Fuhrmann J.L."/>
            <person name="Geoghagen N.S.M."/>
            <person name="Gnehm C.L."/>
            <person name="McDonald L.A."/>
            <person name="Small K.V."/>
            <person name="Fraser C.M."/>
            <person name="Smith H.O."/>
            <person name="Venter J.C."/>
        </authorList>
    </citation>
    <scope>NUCLEOTIDE SEQUENCE [LARGE SCALE GENOMIC DNA]</scope>
    <source>
        <strain>ATCC 51907 / DSM 11121 / KW20 / Rd</strain>
    </source>
</reference>
<reference key="2">
    <citation type="submission" date="1996-09" db="EMBL/GenBank/DDBJ databases">
        <authorList>
            <person name="White O."/>
            <person name="Clayton R.A."/>
            <person name="Kerlavage A.R."/>
            <person name="Fleischmann R.D."/>
        </authorList>
    </citation>
    <scope>SEQUENCE REVISION</scope>
</reference>
<name>NANE_HAEIN</name>
<keyword id="KW-0119">Carbohydrate metabolism</keyword>
<keyword id="KW-0413">Isomerase</keyword>
<keyword id="KW-1185">Reference proteome</keyword>